<organism>
    <name type="scientific">Bartonella quintana (strain Toulouse)</name>
    <name type="common">Rochalimaea quintana</name>
    <dbReference type="NCBI Taxonomy" id="283165"/>
    <lineage>
        <taxon>Bacteria</taxon>
        <taxon>Pseudomonadati</taxon>
        <taxon>Pseudomonadota</taxon>
        <taxon>Alphaproteobacteria</taxon>
        <taxon>Hyphomicrobiales</taxon>
        <taxon>Bartonellaceae</taxon>
        <taxon>Bartonella</taxon>
    </lineage>
</organism>
<dbReference type="EC" id="2.7.4.3" evidence="1"/>
<dbReference type="EMBL" id="BX897700">
    <property type="protein sequence ID" value="CAF26285.1"/>
    <property type="molecule type" value="Genomic_DNA"/>
</dbReference>
<dbReference type="RefSeq" id="WP_011179532.1">
    <property type="nucleotide sequence ID" value="NC_005955.1"/>
</dbReference>
<dbReference type="SMR" id="Q6FZE3"/>
<dbReference type="KEGG" id="bqu:BQ08020"/>
<dbReference type="eggNOG" id="COG0563">
    <property type="taxonomic scope" value="Bacteria"/>
</dbReference>
<dbReference type="HOGENOM" id="CLU_032354_4_1_5"/>
<dbReference type="OrthoDB" id="9805030at2"/>
<dbReference type="UniPathway" id="UPA00588">
    <property type="reaction ID" value="UER00649"/>
</dbReference>
<dbReference type="Proteomes" id="UP000000597">
    <property type="component" value="Chromosome"/>
</dbReference>
<dbReference type="GO" id="GO:0005737">
    <property type="term" value="C:cytoplasm"/>
    <property type="evidence" value="ECO:0007669"/>
    <property type="project" value="UniProtKB-SubCell"/>
</dbReference>
<dbReference type="GO" id="GO:0004017">
    <property type="term" value="F:adenylate kinase activity"/>
    <property type="evidence" value="ECO:0007669"/>
    <property type="project" value="UniProtKB-UniRule"/>
</dbReference>
<dbReference type="GO" id="GO:0005524">
    <property type="term" value="F:ATP binding"/>
    <property type="evidence" value="ECO:0007669"/>
    <property type="project" value="UniProtKB-UniRule"/>
</dbReference>
<dbReference type="GO" id="GO:0044209">
    <property type="term" value="P:AMP salvage"/>
    <property type="evidence" value="ECO:0007669"/>
    <property type="project" value="UniProtKB-UniRule"/>
</dbReference>
<dbReference type="CDD" id="cd01428">
    <property type="entry name" value="ADK"/>
    <property type="match status" value="1"/>
</dbReference>
<dbReference type="Gene3D" id="3.40.50.300">
    <property type="entry name" value="P-loop containing nucleotide triphosphate hydrolases"/>
    <property type="match status" value="1"/>
</dbReference>
<dbReference type="HAMAP" id="MF_00235">
    <property type="entry name" value="Adenylate_kinase_Adk"/>
    <property type="match status" value="1"/>
</dbReference>
<dbReference type="InterPro" id="IPR006259">
    <property type="entry name" value="Adenyl_kin_sub"/>
</dbReference>
<dbReference type="InterPro" id="IPR000850">
    <property type="entry name" value="Adenylat/UMP-CMP_kin"/>
</dbReference>
<dbReference type="InterPro" id="IPR033690">
    <property type="entry name" value="Adenylat_kinase_CS"/>
</dbReference>
<dbReference type="InterPro" id="IPR027417">
    <property type="entry name" value="P-loop_NTPase"/>
</dbReference>
<dbReference type="NCBIfam" id="TIGR01351">
    <property type="entry name" value="adk"/>
    <property type="match status" value="1"/>
</dbReference>
<dbReference type="NCBIfam" id="NF001381">
    <property type="entry name" value="PRK00279.1-3"/>
    <property type="match status" value="1"/>
</dbReference>
<dbReference type="NCBIfam" id="NF011100">
    <property type="entry name" value="PRK14527.1"/>
    <property type="match status" value="1"/>
</dbReference>
<dbReference type="NCBIfam" id="NF011104">
    <property type="entry name" value="PRK14531.1"/>
    <property type="match status" value="1"/>
</dbReference>
<dbReference type="NCBIfam" id="NF011105">
    <property type="entry name" value="PRK14532.1"/>
    <property type="match status" value="1"/>
</dbReference>
<dbReference type="PANTHER" id="PTHR23359">
    <property type="entry name" value="NUCLEOTIDE KINASE"/>
    <property type="match status" value="1"/>
</dbReference>
<dbReference type="Pfam" id="PF00406">
    <property type="entry name" value="ADK"/>
    <property type="match status" value="1"/>
</dbReference>
<dbReference type="PRINTS" id="PR00094">
    <property type="entry name" value="ADENYLTKNASE"/>
</dbReference>
<dbReference type="SUPFAM" id="SSF52540">
    <property type="entry name" value="P-loop containing nucleoside triphosphate hydrolases"/>
    <property type="match status" value="1"/>
</dbReference>
<dbReference type="PROSITE" id="PS00113">
    <property type="entry name" value="ADENYLATE_KINASE"/>
    <property type="match status" value="1"/>
</dbReference>
<feature type="chain" id="PRO_0000158733" description="Adenylate kinase">
    <location>
        <begin position="1"/>
        <end position="192"/>
    </location>
</feature>
<feature type="region of interest" description="NMP" evidence="1">
    <location>
        <begin position="30"/>
        <end position="59"/>
    </location>
</feature>
<feature type="region of interest" description="LID" evidence="1">
    <location>
        <begin position="126"/>
        <end position="142"/>
    </location>
</feature>
<feature type="binding site" evidence="1">
    <location>
        <begin position="10"/>
        <end position="15"/>
    </location>
    <ligand>
        <name>ATP</name>
        <dbReference type="ChEBI" id="CHEBI:30616"/>
    </ligand>
</feature>
<feature type="binding site" evidence="1">
    <location>
        <position position="31"/>
    </location>
    <ligand>
        <name>AMP</name>
        <dbReference type="ChEBI" id="CHEBI:456215"/>
    </ligand>
</feature>
<feature type="binding site" evidence="1">
    <location>
        <position position="36"/>
    </location>
    <ligand>
        <name>AMP</name>
        <dbReference type="ChEBI" id="CHEBI:456215"/>
    </ligand>
</feature>
<feature type="binding site" evidence="1">
    <location>
        <begin position="57"/>
        <end position="59"/>
    </location>
    <ligand>
        <name>AMP</name>
        <dbReference type="ChEBI" id="CHEBI:456215"/>
    </ligand>
</feature>
<feature type="binding site" evidence="1">
    <location>
        <begin position="85"/>
        <end position="88"/>
    </location>
    <ligand>
        <name>AMP</name>
        <dbReference type="ChEBI" id="CHEBI:456215"/>
    </ligand>
</feature>
<feature type="binding site" evidence="1">
    <location>
        <position position="92"/>
    </location>
    <ligand>
        <name>AMP</name>
        <dbReference type="ChEBI" id="CHEBI:456215"/>
    </ligand>
</feature>
<feature type="binding site" evidence="1">
    <location>
        <position position="127"/>
    </location>
    <ligand>
        <name>ATP</name>
        <dbReference type="ChEBI" id="CHEBI:30616"/>
    </ligand>
</feature>
<feature type="binding site" evidence="1">
    <location>
        <position position="139"/>
    </location>
    <ligand>
        <name>AMP</name>
        <dbReference type="ChEBI" id="CHEBI:456215"/>
    </ligand>
</feature>
<feature type="binding site" evidence="1">
    <location>
        <position position="150"/>
    </location>
    <ligand>
        <name>AMP</name>
        <dbReference type="ChEBI" id="CHEBI:456215"/>
    </ligand>
</feature>
<feature type="binding site" evidence="1">
    <location>
        <position position="178"/>
    </location>
    <ligand>
        <name>ATP</name>
        <dbReference type="ChEBI" id="CHEBI:30616"/>
    </ligand>
</feature>
<gene>
    <name evidence="1" type="primary">adk</name>
    <name type="ordered locus">BQ08020</name>
</gene>
<protein>
    <recommendedName>
        <fullName evidence="1">Adenylate kinase</fullName>
        <shortName evidence="1">AK</shortName>
        <ecNumber evidence="1">2.7.4.3</ecNumber>
    </recommendedName>
    <alternativeName>
        <fullName evidence="1">ATP-AMP transphosphorylase</fullName>
    </alternativeName>
    <alternativeName>
        <fullName evidence="1">ATP:AMP phosphotransferase</fullName>
    </alternativeName>
    <alternativeName>
        <fullName evidence="1">Adenylate monophosphate kinase</fullName>
    </alternativeName>
</protein>
<name>KAD_BARQU</name>
<comment type="function">
    <text evidence="1">Catalyzes the reversible transfer of the terminal phosphate group between ATP and AMP. Plays an important role in cellular energy homeostasis and in adenine nucleotide metabolism.</text>
</comment>
<comment type="catalytic activity">
    <reaction evidence="1">
        <text>AMP + ATP = 2 ADP</text>
        <dbReference type="Rhea" id="RHEA:12973"/>
        <dbReference type="ChEBI" id="CHEBI:30616"/>
        <dbReference type="ChEBI" id="CHEBI:456215"/>
        <dbReference type="ChEBI" id="CHEBI:456216"/>
        <dbReference type="EC" id="2.7.4.3"/>
    </reaction>
</comment>
<comment type="pathway">
    <text evidence="1">Purine metabolism; AMP biosynthesis via salvage pathway; AMP from ADP: step 1/1.</text>
</comment>
<comment type="subunit">
    <text evidence="1">Monomer.</text>
</comment>
<comment type="subcellular location">
    <subcellularLocation>
        <location evidence="1">Cytoplasm</location>
    </subcellularLocation>
</comment>
<comment type="domain">
    <text evidence="1">Consists of three domains, a large central CORE domain and two small peripheral domains, NMPbind and LID, which undergo movements during catalysis. The LID domain closes over the site of phosphoryl transfer upon ATP binding. Assembling and dissambling the active center during each catalytic cycle provides an effective means to prevent ATP hydrolysis.</text>
</comment>
<comment type="similarity">
    <text evidence="1">Belongs to the adenylate kinase family.</text>
</comment>
<proteinExistence type="inferred from homology"/>
<accession>Q6FZE3</accession>
<sequence>MRVVFLGPPGSGKGTQARMLTEEYRIPQLSTGDMLREVISRETEVGRKAKAIINAGALVSDSIVNQIVSNRINESDCINGFVLDGYPRTVGQAEVLQQILQSKNMQLDAVIELIVDENALIERMKKRVQETIAVGGQVRSDDNHVAFAKRLVEYREKTAPLSKFYSERGLLKVVDGMMAVTEVSRVIRGFFK</sequence>
<evidence type="ECO:0000255" key="1">
    <source>
        <dbReference type="HAMAP-Rule" id="MF_00235"/>
    </source>
</evidence>
<keyword id="KW-0067">ATP-binding</keyword>
<keyword id="KW-0963">Cytoplasm</keyword>
<keyword id="KW-0418">Kinase</keyword>
<keyword id="KW-0545">Nucleotide biosynthesis</keyword>
<keyword id="KW-0547">Nucleotide-binding</keyword>
<keyword id="KW-0808">Transferase</keyword>
<reference key="1">
    <citation type="journal article" date="2004" name="Proc. Natl. Acad. Sci. U.S.A.">
        <title>The louse-borne human pathogen Bartonella quintana is a genomic derivative of the zoonotic agent Bartonella henselae.</title>
        <authorList>
            <person name="Alsmark U.C.M."/>
            <person name="Frank A.C."/>
            <person name="Karlberg E.O."/>
            <person name="Legault B.-A."/>
            <person name="Ardell D.H."/>
            <person name="Canbaeck B."/>
            <person name="Eriksson A.-S."/>
            <person name="Naeslund A.K."/>
            <person name="Handley S.A."/>
            <person name="Huvet M."/>
            <person name="La Scola B."/>
            <person name="Holmberg M."/>
            <person name="Andersson S.G.E."/>
        </authorList>
    </citation>
    <scope>NUCLEOTIDE SEQUENCE [LARGE SCALE GENOMIC DNA]</scope>
    <source>
        <strain>Toulouse</strain>
    </source>
</reference>